<name>TRPC_AZOBR</name>
<feature type="chain" id="PRO_0000154207" description="Indole-3-glycerol phosphate synthase">
    <location>
        <begin position="1"/>
        <end position="262"/>
    </location>
</feature>
<protein>
    <recommendedName>
        <fullName>Indole-3-glycerol phosphate synthase</fullName>
        <shortName>IGPS</shortName>
        <ecNumber>4.1.1.48</ecNumber>
    </recommendedName>
</protein>
<sequence>MSDVLTRICDDKRALVQARKSARPLSAVEDDARSADPAGGFIRALRRTVDGGRYGLIAEIKKASPSKGLIRPDFDPPSLARAYRGGGATCLSVLTDEPYFQGCDDYLLSARAAVDLPVLRKDFMVDPYQIAESRALGADCILIIMAALSDAQAVEIEDAAIAWGLDVLVEVHNREELDRALALKTPLLGVNNRNLKTLAVDIATTEELAAHVPADRMLVAESGLYSPADLSRMAAVGARCFLVGESLMRQEDVSAATRALLA</sequence>
<proteinExistence type="inferred from homology"/>
<dbReference type="EC" id="4.1.1.48"/>
<dbReference type="EMBL" id="X57853">
    <property type="protein sequence ID" value="CAA40986.1"/>
    <property type="molecule type" value="Genomic_DNA"/>
</dbReference>
<dbReference type="PIR" id="S17705">
    <property type="entry name" value="S17705"/>
</dbReference>
<dbReference type="SMR" id="P26938"/>
<dbReference type="UniPathway" id="UPA00035">
    <property type="reaction ID" value="UER00043"/>
</dbReference>
<dbReference type="GO" id="GO:0004425">
    <property type="term" value="F:indole-3-glycerol-phosphate synthase activity"/>
    <property type="evidence" value="ECO:0007669"/>
    <property type="project" value="UniProtKB-UniRule"/>
</dbReference>
<dbReference type="GO" id="GO:0004640">
    <property type="term" value="F:phosphoribosylanthranilate isomerase activity"/>
    <property type="evidence" value="ECO:0007669"/>
    <property type="project" value="TreeGrafter"/>
</dbReference>
<dbReference type="GO" id="GO:0000162">
    <property type="term" value="P:L-tryptophan biosynthetic process"/>
    <property type="evidence" value="ECO:0007669"/>
    <property type="project" value="UniProtKB-UniRule"/>
</dbReference>
<dbReference type="CDD" id="cd00331">
    <property type="entry name" value="IGPS"/>
    <property type="match status" value="1"/>
</dbReference>
<dbReference type="FunFam" id="3.20.20.70:FF:000024">
    <property type="entry name" value="Indole-3-glycerol phosphate synthase"/>
    <property type="match status" value="1"/>
</dbReference>
<dbReference type="Gene3D" id="3.20.20.70">
    <property type="entry name" value="Aldolase class I"/>
    <property type="match status" value="1"/>
</dbReference>
<dbReference type="HAMAP" id="MF_00134_B">
    <property type="entry name" value="IGPS_B"/>
    <property type="match status" value="1"/>
</dbReference>
<dbReference type="InterPro" id="IPR013785">
    <property type="entry name" value="Aldolase_TIM"/>
</dbReference>
<dbReference type="InterPro" id="IPR045186">
    <property type="entry name" value="Indole-3-glycerol_P_synth"/>
</dbReference>
<dbReference type="InterPro" id="IPR013798">
    <property type="entry name" value="Indole-3-glycerol_P_synth_dom"/>
</dbReference>
<dbReference type="InterPro" id="IPR001468">
    <property type="entry name" value="Indole-3-GlycerolPSynthase_CS"/>
</dbReference>
<dbReference type="InterPro" id="IPR011060">
    <property type="entry name" value="RibuloseP-bd_barrel"/>
</dbReference>
<dbReference type="NCBIfam" id="NF001370">
    <property type="entry name" value="PRK00278.1-2"/>
    <property type="match status" value="1"/>
</dbReference>
<dbReference type="NCBIfam" id="NF001373">
    <property type="entry name" value="PRK00278.1-6"/>
    <property type="match status" value="1"/>
</dbReference>
<dbReference type="NCBIfam" id="NF001377">
    <property type="entry name" value="PRK00278.2-4"/>
    <property type="match status" value="1"/>
</dbReference>
<dbReference type="PANTHER" id="PTHR22854:SF2">
    <property type="entry name" value="INDOLE-3-GLYCEROL-PHOSPHATE SYNTHASE"/>
    <property type="match status" value="1"/>
</dbReference>
<dbReference type="PANTHER" id="PTHR22854">
    <property type="entry name" value="TRYPTOPHAN BIOSYNTHESIS PROTEIN"/>
    <property type="match status" value="1"/>
</dbReference>
<dbReference type="Pfam" id="PF00218">
    <property type="entry name" value="IGPS"/>
    <property type="match status" value="1"/>
</dbReference>
<dbReference type="SUPFAM" id="SSF51366">
    <property type="entry name" value="Ribulose-phoshate binding barrel"/>
    <property type="match status" value="1"/>
</dbReference>
<dbReference type="PROSITE" id="PS00614">
    <property type="entry name" value="IGPS"/>
    <property type="match status" value="1"/>
</dbReference>
<comment type="function">
    <text>Participates in the tryptophan-dependent indole-3-acetic acid production, which is a phytohormone released by A.brasilense.</text>
</comment>
<comment type="catalytic activity">
    <reaction>
        <text>1-(2-carboxyphenylamino)-1-deoxy-D-ribulose 5-phosphate + H(+) = (1S,2R)-1-C-(indol-3-yl)glycerol 3-phosphate + CO2 + H2O</text>
        <dbReference type="Rhea" id="RHEA:23476"/>
        <dbReference type="ChEBI" id="CHEBI:15377"/>
        <dbReference type="ChEBI" id="CHEBI:15378"/>
        <dbReference type="ChEBI" id="CHEBI:16526"/>
        <dbReference type="ChEBI" id="CHEBI:58613"/>
        <dbReference type="ChEBI" id="CHEBI:58866"/>
        <dbReference type="EC" id="4.1.1.48"/>
    </reaction>
</comment>
<comment type="pathway">
    <text>Amino-acid biosynthesis; L-tryptophan biosynthesis; L-tryptophan from chorismate: step 4/5.</text>
</comment>
<comment type="similarity">
    <text evidence="1">Belongs to the TrpC family.</text>
</comment>
<keyword id="KW-0028">Amino-acid biosynthesis</keyword>
<keyword id="KW-0057">Aromatic amino acid biosynthesis</keyword>
<keyword id="KW-0210">Decarboxylase</keyword>
<keyword id="KW-0456">Lyase</keyword>
<keyword id="KW-0822">Tryptophan biosynthesis</keyword>
<gene>
    <name type="primary">trpC</name>
</gene>
<organism>
    <name type="scientific">Azospirillum brasilense</name>
    <dbReference type="NCBI Taxonomy" id="192"/>
    <lineage>
        <taxon>Bacteria</taxon>
        <taxon>Pseudomonadati</taxon>
        <taxon>Pseudomonadota</taxon>
        <taxon>Alphaproteobacteria</taxon>
        <taxon>Rhodospirillales</taxon>
        <taxon>Azospirillaceae</taxon>
        <taxon>Azospirillum</taxon>
    </lineage>
</organism>
<evidence type="ECO:0000305" key="1"/>
<accession>P26938</accession>
<reference key="1">
    <citation type="journal article" date="1991" name="Mol. Gen. Genet.">
        <title>Relationship between tryptophan biosynthesis and indole-3-acetic acid production in Azospirillum: identification and sequencing of a trpGDC cluster.</title>
        <authorList>
            <person name="Zimmer W."/>
            <person name="Aparicio C."/>
            <person name="Elmerich C."/>
        </authorList>
    </citation>
    <scope>NUCLEOTIDE SEQUENCE [GENOMIC DNA]</scope>
    <source>
        <strain>ATCC 29145 / DSM 1690 / IMET 11303 / Sp7</strain>
    </source>
</reference>